<accession>Q41228</accession>
<name>PSAEA_NICSY</name>
<protein>
    <recommendedName>
        <fullName>Photosystem I reaction center subunit IV A, chloroplastic</fullName>
        <shortName>PSI-E A</shortName>
    </recommendedName>
    <component>
        <recommendedName>
            <fullName>Photosystem I reaction center subunit IV A isoform 2</fullName>
        </recommendedName>
    </component>
</protein>
<reference key="1">
    <citation type="journal article" date="1994" name="Plant Cell Physiol.">
        <title>Microheterogeneity of PSI-E subunit of photosystem I in Nicotiana sylvestris.</title>
        <authorList>
            <person name="Obokata J."/>
            <person name="Mikami K."/>
            <person name="Yamamoto Y."/>
            <person name="Hayashida N."/>
        </authorList>
    </citation>
    <scope>NUCLEOTIDE SEQUENCE [MRNA]</scope>
    <scope>PARTIAL PROTEIN SEQUENCE</scope>
    <source>
        <tissue>Leaf</tissue>
    </source>
</reference>
<dbReference type="EMBL" id="S72356">
    <property type="protein sequence ID" value="AAB31704.1"/>
    <property type="molecule type" value="mRNA"/>
</dbReference>
<dbReference type="PIR" id="T16962">
    <property type="entry name" value="T16962"/>
</dbReference>
<dbReference type="RefSeq" id="NP_001289510.1">
    <property type="nucleotide sequence ID" value="NM_001302581.1"/>
</dbReference>
<dbReference type="SMR" id="Q41228"/>
<dbReference type="STRING" id="4096.Q41228"/>
<dbReference type="GeneID" id="104243298"/>
<dbReference type="KEGG" id="nsy:104243298"/>
<dbReference type="eggNOG" id="ENOG502S1U2">
    <property type="taxonomic scope" value="Eukaryota"/>
</dbReference>
<dbReference type="Proteomes" id="UP000189701">
    <property type="component" value="Unplaced"/>
</dbReference>
<dbReference type="GO" id="GO:0009535">
    <property type="term" value="C:chloroplast thylakoid membrane"/>
    <property type="evidence" value="ECO:0007669"/>
    <property type="project" value="UniProtKB-SubCell"/>
</dbReference>
<dbReference type="GO" id="GO:0009538">
    <property type="term" value="C:photosystem I reaction center"/>
    <property type="evidence" value="ECO:0007669"/>
    <property type="project" value="InterPro"/>
</dbReference>
<dbReference type="GO" id="GO:0015979">
    <property type="term" value="P:photosynthesis"/>
    <property type="evidence" value="ECO:0007669"/>
    <property type="project" value="UniProtKB-KW"/>
</dbReference>
<dbReference type="Gene3D" id="2.30.30.50">
    <property type="match status" value="1"/>
</dbReference>
<dbReference type="InterPro" id="IPR008990">
    <property type="entry name" value="Elect_transpt_acc-like_dom_sf"/>
</dbReference>
<dbReference type="InterPro" id="IPR003375">
    <property type="entry name" value="PSI_PsaE"/>
</dbReference>
<dbReference type="PANTHER" id="PTHR34549">
    <property type="entry name" value="PHOTOSYSTEM I REACTION CENTER SUBUNIT IV A, CHLOROPLASTIC-RELATED"/>
    <property type="match status" value="1"/>
</dbReference>
<dbReference type="PANTHER" id="PTHR34549:SF8">
    <property type="entry name" value="PHOTOSYSTEM I REACTION CENTER SUBUNIT IV B, CHLOROPLASTIC"/>
    <property type="match status" value="1"/>
</dbReference>
<dbReference type="Pfam" id="PF02427">
    <property type="entry name" value="PSI_PsaE"/>
    <property type="match status" value="1"/>
</dbReference>
<dbReference type="SUPFAM" id="SSF50090">
    <property type="entry name" value="Electron transport accessory proteins"/>
    <property type="match status" value="1"/>
</dbReference>
<gene>
    <name type="primary">PSAEA</name>
</gene>
<comment type="function">
    <text evidence="1">Stabilizes the interaction between PsaC and the PSI core, assists the docking of the ferredoxin to PSI and interacts with ferredoxin-NADP oxidoreductase.</text>
</comment>
<comment type="subcellular location">
    <subcellularLocation>
        <location evidence="1">Plastid</location>
        <location evidence="1">Chloroplast thylakoid membrane</location>
        <topology evidence="1">Peripheral membrane protein</topology>
    </subcellularLocation>
</comment>
<comment type="PTM">
    <text>2 isoforms exists (ratio 1:1). With or without the N-terminal alanine.</text>
</comment>
<comment type="similarity">
    <text evidence="3">Belongs to the PsaE family.</text>
</comment>
<evidence type="ECO:0000250" key="1"/>
<evidence type="ECO:0000256" key="2">
    <source>
        <dbReference type="SAM" id="MobiDB-lite"/>
    </source>
</evidence>
<evidence type="ECO:0000305" key="3"/>
<keyword id="KW-0150">Chloroplast</keyword>
<keyword id="KW-0903">Direct protein sequencing</keyword>
<keyword id="KW-0472">Membrane</keyword>
<keyword id="KW-0602">Photosynthesis</keyword>
<keyword id="KW-0603">Photosystem I</keyword>
<keyword id="KW-0934">Plastid</keyword>
<keyword id="KW-1185">Reference proteome</keyword>
<keyword id="KW-0793">Thylakoid</keyword>
<keyword id="KW-0809">Transit peptide</keyword>
<feature type="transit peptide" description="Chloroplast">
    <location>
        <begin position="1"/>
        <end position="49"/>
    </location>
</feature>
<feature type="chain" id="PRO_0000029382" description="Photosystem I reaction center subunit IV A, chloroplastic">
    <location>
        <begin position="50"/>
        <end position="141"/>
    </location>
</feature>
<feature type="chain" id="PRO_0000029383" description="Photosystem I reaction center subunit IV A isoform 2">
    <location>
        <begin position="51"/>
        <end position="141"/>
    </location>
</feature>
<feature type="region of interest" description="Disordered" evidence="2">
    <location>
        <begin position="57"/>
        <end position="83"/>
    </location>
</feature>
<feature type="compositionally biased region" description="Low complexity" evidence="2">
    <location>
        <begin position="57"/>
        <end position="73"/>
    </location>
</feature>
<proteinExistence type="evidence at protein level"/>
<organism>
    <name type="scientific">Nicotiana sylvestris</name>
    <name type="common">Wood tobacco</name>
    <name type="synonym">South American tobacco</name>
    <dbReference type="NCBI Taxonomy" id="4096"/>
    <lineage>
        <taxon>Eukaryota</taxon>
        <taxon>Viridiplantae</taxon>
        <taxon>Streptophyta</taxon>
        <taxon>Embryophyta</taxon>
        <taxon>Tracheophyta</taxon>
        <taxon>Spermatophyta</taxon>
        <taxon>Magnoliopsida</taxon>
        <taxon>eudicotyledons</taxon>
        <taxon>Gunneridae</taxon>
        <taxon>Pentapetalae</taxon>
        <taxon>asterids</taxon>
        <taxon>lamiids</taxon>
        <taxon>Solanales</taxon>
        <taxon>Solanaceae</taxon>
        <taxon>Nicotianoideae</taxon>
        <taxon>Nicotianeae</taxon>
        <taxon>Nicotiana</taxon>
    </lineage>
</organism>
<sequence>MASCNMASAASNFLVATPNVASNTNTSRTTMLFFSSKNYGSTAPRLVVRAAEEAAPPAAAATAEPAEAPVKAAKPPPIGPKRGTKVRILRKESYWYKGTGSVVACDQDPNTRYPVVVRFNKVNYANVSTNNYALDEIEEVK</sequence>